<gene>
    <name evidence="1" type="primary">gvpA</name>
    <name type="ordered locus">Mjls_2375</name>
</gene>
<evidence type="ECO:0000255" key="1">
    <source>
        <dbReference type="HAMAP-Rule" id="MF_00576"/>
    </source>
</evidence>
<evidence type="ECO:0000256" key="2">
    <source>
        <dbReference type="SAM" id="MobiDB-lite"/>
    </source>
</evidence>
<proteinExistence type="inferred from homology"/>
<comment type="function">
    <text evidence="1">Gas vesicles are hollow, gas filled proteinaceous nanostructures found in some microorganisms. During planktonic growth they allow positioning of the organism at a favorable depth for light or nutrient acquisition. GvpA forms the protein shell.</text>
</comment>
<comment type="subunit">
    <text evidence="1">The gas vesicle shell is 2 nm thick and consists of a single layer of this protein. It forms helical ribs nearly perpendicular to the long axis of the vesicle.</text>
</comment>
<comment type="subcellular location">
    <subcellularLocation>
        <location evidence="1">Gas vesicle shell</location>
    </subcellularLocation>
</comment>
<comment type="similarity">
    <text evidence="1">Belongs to the gas vesicle GvpA family.</text>
</comment>
<keyword id="KW-0304">Gas vesicle</keyword>
<dbReference type="EMBL" id="CP000580">
    <property type="protein sequence ID" value="ABN98159.1"/>
    <property type="molecule type" value="Genomic_DNA"/>
</dbReference>
<dbReference type="SMR" id="A3PZ32"/>
<dbReference type="KEGG" id="mjl:Mjls_2375"/>
<dbReference type="HOGENOM" id="CLU_117660_0_0_11"/>
<dbReference type="BioCyc" id="MSP164757:G1G8C-2394-MONOMER"/>
<dbReference type="GO" id="GO:0033172">
    <property type="term" value="C:gas vesicle shell"/>
    <property type="evidence" value="ECO:0007669"/>
    <property type="project" value="UniProtKB-UniRule"/>
</dbReference>
<dbReference type="GO" id="GO:0012506">
    <property type="term" value="C:vesicle membrane"/>
    <property type="evidence" value="ECO:0007669"/>
    <property type="project" value="InterPro"/>
</dbReference>
<dbReference type="GO" id="GO:0005198">
    <property type="term" value="F:structural molecule activity"/>
    <property type="evidence" value="ECO:0007669"/>
    <property type="project" value="InterPro"/>
</dbReference>
<dbReference type="HAMAP" id="MF_00576">
    <property type="entry name" value="Gas_vesicle_A"/>
    <property type="match status" value="1"/>
</dbReference>
<dbReference type="InterPro" id="IPR000638">
    <property type="entry name" value="Gas-vesicle_GvpA-like"/>
</dbReference>
<dbReference type="InterPro" id="IPR047870">
    <property type="entry name" value="Gas_vesicle_GvpA"/>
</dbReference>
<dbReference type="InterPro" id="IPR050530">
    <property type="entry name" value="GvpA"/>
</dbReference>
<dbReference type="InterPro" id="IPR018493">
    <property type="entry name" value="GvpA-like_CS"/>
</dbReference>
<dbReference type="NCBIfam" id="NF006872">
    <property type="entry name" value="PRK09368.1"/>
    <property type="match status" value="1"/>
</dbReference>
<dbReference type="PANTHER" id="PTHR35344:SF4">
    <property type="entry name" value="GAS VESICLE PROTEIN A1"/>
    <property type="match status" value="1"/>
</dbReference>
<dbReference type="PANTHER" id="PTHR35344">
    <property type="entry name" value="GAS VESICLE STRUCTURAL PROTEIN 2-RELATED"/>
    <property type="match status" value="1"/>
</dbReference>
<dbReference type="Pfam" id="PF00741">
    <property type="entry name" value="Gas_vesicle"/>
    <property type="match status" value="1"/>
</dbReference>
<dbReference type="PROSITE" id="PS00234">
    <property type="entry name" value="GAS_VESICLE_A_1"/>
    <property type="match status" value="1"/>
</dbReference>
<dbReference type="PROSITE" id="PS00669">
    <property type="entry name" value="GAS_VESICLE_A_2"/>
    <property type="match status" value="1"/>
</dbReference>
<organism>
    <name type="scientific">Mycobacterium sp. (strain JLS)</name>
    <dbReference type="NCBI Taxonomy" id="164757"/>
    <lineage>
        <taxon>Bacteria</taxon>
        <taxon>Bacillati</taxon>
        <taxon>Actinomycetota</taxon>
        <taxon>Actinomycetes</taxon>
        <taxon>Mycobacteriales</taxon>
        <taxon>Mycobacteriaceae</taxon>
        <taxon>Mycobacterium</taxon>
    </lineage>
</organism>
<accession>A3PZ32</accession>
<protein>
    <recommendedName>
        <fullName evidence="1">Gas vesicle protein A</fullName>
        <shortName evidence="1">GvpA</shortName>
    </recommendedName>
</protein>
<name>GVPA_MYCSJ</name>
<feature type="chain" id="PRO_1000025107" description="Gas vesicle protein A">
    <location>
        <begin position="1"/>
        <end position="139"/>
    </location>
</feature>
<feature type="region of interest" description="Disordered" evidence="2">
    <location>
        <begin position="113"/>
        <end position="139"/>
    </location>
</feature>
<feature type="compositionally biased region" description="Basic residues" evidence="2">
    <location>
        <begin position="129"/>
        <end position="139"/>
    </location>
</feature>
<sequence>MSTAIQPAGTAGGGGSDSNGLADVVDTILDKGLVLDAYVRVSVVGIEILTVDARVVVASVDTYLRYADAVNRLDIVNEDPKSDLGGLVGDVAESATSGVAKGKTTGVLEAAGEKLGDMLTSDEPEPRKATRVRSRRADR</sequence>
<reference key="1">
    <citation type="submission" date="2007-02" db="EMBL/GenBank/DDBJ databases">
        <title>Complete sequence of Mycobacterium sp. JLS.</title>
        <authorList>
            <consortium name="US DOE Joint Genome Institute"/>
            <person name="Copeland A."/>
            <person name="Lucas S."/>
            <person name="Lapidus A."/>
            <person name="Barry K."/>
            <person name="Detter J.C."/>
            <person name="Glavina del Rio T."/>
            <person name="Hammon N."/>
            <person name="Israni S."/>
            <person name="Dalin E."/>
            <person name="Tice H."/>
            <person name="Pitluck S."/>
            <person name="Chain P."/>
            <person name="Malfatti S."/>
            <person name="Shin M."/>
            <person name="Vergez L."/>
            <person name="Schmutz J."/>
            <person name="Larimer F."/>
            <person name="Land M."/>
            <person name="Hauser L."/>
            <person name="Kyrpides N."/>
            <person name="Mikhailova N."/>
            <person name="Miller C.D."/>
            <person name="Anderson A.J."/>
            <person name="Sims R.C."/>
            <person name="Richardson P."/>
        </authorList>
    </citation>
    <scope>NUCLEOTIDE SEQUENCE [LARGE SCALE GENOMIC DNA]</scope>
    <source>
        <strain>JLS</strain>
    </source>
</reference>